<comment type="function">
    <text evidence="1">F(1)F(0) ATP synthase produces ATP from ADP in the presence of a proton or sodium gradient. F-type ATPases consist of two structural domains, F(1) containing the extramembraneous catalytic core and F(0) containing the membrane proton channel, linked together by a central stalk and a peripheral stalk. During catalysis, ATP synthesis in the catalytic domain of F(1) is coupled via a rotary mechanism of the central stalk subunits to proton translocation.</text>
</comment>
<comment type="function">
    <text evidence="1">Component of the F(0) channel, it forms part of the peripheral stalk, linking F(1) to F(0).</text>
</comment>
<comment type="subunit">
    <text evidence="1">F-type ATPases have 2 components, F(1) - the catalytic core - and F(0) - the membrane proton channel. F(1) has five subunits: alpha(3), beta(3), gamma(1), delta(1), epsilon(1). F(0) has three main subunits: a(1), b(2) and c(10-14). The alpha and beta chains form an alternating ring which encloses part of the gamma chain. F(1) is attached to F(0) by a central stalk formed by the gamma and epsilon chains, while a peripheral stalk is formed by the delta and b chains.</text>
</comment>
<comment type="subcellular location">
    <subcellularLocation>
        <location evidence="1">Cell membrane</location>
        <topology evidence="1">Single-pass membrane protein</topology>
    </subcellularLocation>
</comment>
<comment type="similarity">
    <text evidence="1">Belongs to the ATPase B chain family.</text>
</comment>
<dbReference type="EMBL" id="M20255">
    <property type="protein sequence ID" value="AAA82522.1"/>
    <property type="molecule type" value="Genomic_DNA"/>
</dbReference>
<dbReference type="EMBL" id="CP001983">
    <property type="protein sequence ID" value="ADE72130.1"/>
    <property type="molecule type" value="Genomic_DNA"/>
</dbReference>
<dbReference type="PIR" id="D31482">
    <property type="entry name" value="D31482"/>
</dbReference>
<dbReference type="RefSeq" id="WP_013059803.1">
    <property type="nucleotide sequence ID" value="NC_014019.1"/>
</dbReference>
<dbReference type="SMR" id="P20601"/>
<dbReference type="STRING" id="545693.BMQ_5152"/>
<dbReference type="KEGG" id="bmq:BMQ_5152"/>
<dbReference type="eggNOG" id="COG0711">
    <property type="taxonomic scope" value="Bacteria"/>
</dbReference>
<dbReference type="HOGENOM" id="CLU_079215_4_2_9"/>
<dbReference type="Proteomes" id="UP000000935">
    <property type="component" value="Chromosome"/>
</dbReference>
<dbReference type="GO" id="GO:0005886">
    <property type="term" value="C:plasma membrane"/>
    <property type="evidence" value="ECO:0007669"/>
    <property type="project" value="UniProtKB-SubCell"/>
</dbReference>
<dbReference type="GO" id="GO:0045259">
    <property type="term" value="C:proton-transporting ATP synthase complex"/>
    <property type="evidence" value="ECO:0007669"/>
    <property type="project" value="UniProtKB-KW"/>
</dbReference>
<dbReference type="GO" id="GO:0046933">
    <property type="term" value="F:proton-transporting ATP synthase activity, rotational mechanism"/>
    <property type="evidence" value="ECO:0007669"/>
    <property type="project" value="UniProtKB-UniRule"/>
</dbReference>
<dbReference type="GO" id="GO:0046961">
    <property type="term" value="F:proton-transporting ATPase activity, rotational mechanism"/>
    <property type="evidence" value="ECO:0007669"/>
    <property type="project" value="TreeGrafter"/>
</dbReference>
<dbReference type="CDD" id="cd06503">
    <property type="entry name" value="ATP-synt_Fo_b"/>
    <property type="match status" value="1"/>
</dbReference>
<dbReference type="Gene3D" id="1.20.5.620">
    <property type="entry name" value="F1F0 ATP synthase subunit B, membrane domain"/>
    <property type="match status" value="1"/>
</dbReference>
<dbReference type="HAMAP" id="MF_01398">
    <property type="entry name" value="ATP_synth_b_bprime"/>
    <property type="match status" value="1"/>
</dbReference>
<dbReference type="InterPro" id="IPR028987">
    <property type="entry name" value="ATP_synth_B-like_membr_sf"/>
</dbReference>
<dbReference type="InterPro" id="IPR002146">
    <property type="entry name" value="ATP_synth_b/b'su_bac/chlpt"/>
</dbReference>
<dbReference type="InterPro" id="IPR005864">
    <property type="entry name" value="ATP_synth_F0_bsu_bac"/>
</dbReference>
<dbReference type="InterPro" id="IPR050059">
    <property type="entry name" value="ATP_synthase_B_chain"/>
</dbReference>
<dbReference type="NCBIfam" id="TIGR01144">
    <property type="entry name" value="ATP_synt_b"/>
    <property type="match status" value="1"/>
</dbReference>
<dbReference type="NCBIfam" id="NF009987">
    <property type="entry name" value="PRK13453.1"/>
    <property type="match status" value="1"/>
</dbReference>
<dbReference type="PANTHER" id="PTHR33445:SF1">
    <property type="entry name" value="ATP SYNTHASE SUBUNIT B"/>
    <property type="match status" value="1"/>
</dbReference>
<dbReference type="PANTHER" id="PTHR33445">
    <property type="entry name" value="ATP SYNTHASE SUBUNIT B', CHLOROPLASTIC"/>
    <property type="match status" value="1"/>
</dbReference>
<dbReference type="Pfam" id="PF00430">
    <property type="entry name" value="ATP-synt_B"/>
    <property type="match status" value="1"/>
</dbReference>
<dbReference type="SUPFAM" id="SSF81573">
    <property type="entry name" value="F1F0 ATP synthase subunit B, membrane domain"/>
    <property type="match status" value="1"/>
</dbReference>
<sequence>MAVSNMFVLGAAGINGGDILFQLVMFLILLALLQKFAFGPVMGIMKKREEHIAGEIDEAEKQNEEAKKLVEEQREILKQSRQEVQVMMENARKSAEDKKEEIVAAAREESERLKAAAKQEIEQQKDQAVAALREQVASLSVLIASKVIEKELSEQDQEKLIHEYIQEVGDVR</sequence>
<name>ATPF_PRIM1</name>
<evidence type="ECO:0000255" key="1">
    <source>
        <dbReference type="HAMAP-Rule" id="MF_01398"/>
    </source>
</evidence>
<protein>
    <recommendedName>
        <fullName evidence="1">ATP synthase subunit b</fullName>
    </recommendedName>
    <alternativeName>
        <fullName evidence="1">ATP synthase F(0) sector subunit b</fullName>
    </alternativeName>
    <alternativeName>
        <fullName evidence="1">ATPase subunit I</fullName>
    </alternativeName>
    <alternativeName>
        <fullName evidence="1">F-type ATPase subunit b</fullName>
        <shortName evidence="1">F-ATPase subunit b</shortName>
    </alternativeName>
</protein>
<gene>
    <name evidence="1" type="primary">atpF</name>
    <name type="ordered locus">BMQ_5152</name>
</gene>
<keyword id="KW-0066">ATP synthesis</keyword>
<keyword id="KW-1003">Cell membrane</keyword>
<keyword id="KW-0138">CF(0)</keyword>
<keyword id="KW-0375">Hydrogen ion transport</keyword>
<keyword id="KW-0406">Ion transport</keyword>
<keyword id="KW-0472">Membrane</keyword>
<keyword id="KW-1185">Reference proteome</keyword>
<keyword id="KW-0812">Transmembrane</keyword>
<keyword id="KW-1133">Transmembrane helix</keyword>
<keyword id="KW-0813">Transport</keyword>
<proteinExistence type="inferred from homology"/>
<organism>
    <name type="scientific">Priestia megaterium (strain ATCC 12872 / QMB1551)</name>
    <name type="common">Bacillus megaterium</name>
    <dbReference type="NCBI Taxonomy" id="545693"/>
    <lineage>
        <taxon>Bacteria</taxon>
        <taxon>Bacillati</taxon>
        <taxon>Bacillota</taxon>
        <taxon>Bacilli</taxon>
        <taxon>Bacillales</taxon>
        <taxon>Bacillaceae</taxon>
        <taxon>Priestia</taxon>
    </lineage>
</organism>
<accession>P20601</accession>
<accession>D5DWG5</accession>
<feature type="chain" id="PRO_0000082365" description="ATP synthase subunit b">
    <location>
        <begin position="1"/>
        <end position="172"/>
    </location>
</feature>
<feature type="transmembrane region" description="Helical" evidence="1">
    <location>
        <begin position="13"/>
        <end position="33"/>
    </location>
</feature>
<reference key="1">
    <citation type="journal article" date="1989" name="J. Biol. Chem.">
        <title>Organization and sequence of the genes coding for the proton-translocating ATPase of Bacillus megaterium.</title>
        <authorList>
            <person name="Brusilow W.S.A."/>
            <person name="Scarpetta M.A."/>
            <person name="Hawthorne C.A."/>
            <person name="Clark W.P."/>
        </authorList>
    </citation>
    <scope>NUCLEOTIDE SEQUENCE [GENOMIC DNA]</scope>
</reference>
<reference key="2">
    <citation type="journal article" date="2011" name="J. Bacteriol.">
        <title>Genome sequences of the biotechnologically important Bacillus megaterium strains QM B1551 and DSM319.</title>
        <authorList>
            <person name="Eppinger M."/>
            <person name="Bunk B."/>
            <person name="Johns M.A."/>
            <person name="Edirisinghe J.N."/>
            <person name="Kutumbaka K.K."/>
            <person name="Koenig S.S."/>
            <person name="Creasy H.H."/>
            <person name="Rosovitz M.J."/>
            <person name="Riley D.R."/>
            <person name="Daugherty S."/>
            <person name="Martin M."/>
            <person name="Elbourne L.D."/>
            <person name="Paulsen I."/>
            <person name="Biedendieck R."/>
            <person name="Braun C."/>
            <person name="Grayburn S."/>
            <person name="Dhingra S."/>
            <person name="Lukyanchuk V."/>
            <person name="Ball B."/>
            <person name="Ul-Qamar R."/>
            <person name="Seibel J."/>
            <person name="Bremer E."/>
            <person name="Jahn D."/>
            <person name="Ravel J."/>
            <person name="Vary P.S."/>
        </authorList>
    </citation>
    <scope>NUCLEOTIDE SEQUENCE [LARGE SCALE GENOMIC DNA]</scope>
    <source>
        <strain>ATCC 12872 / DSM 1804 / QMB1551</strain>
    </source>
</reference>